<sequence length="361" mass="42144">MYIKNLELINFRNYEILSLKLHSGINVFIGDNAQGKTNILESIYYCSIGKSHRTNKDKELIKWGARDAYISVYISKERLDKKIDIKIFKEGKKGVRVNSIKLKTISDLIGVFNVVMFSPEDLKIVKESPSYRRKFLDIELSKLNKKYYYSLVRYNKVLNERNTILRKWNSNTEVTEVYDHQLSKYGSYIIKERLKYIESLSIRGNKIHKDITSQKENIEFKYITSIKDLNNIQNDFYNLLRENVKKDFEKGSTSFGPHRDDFAVNINNTDTRTFGSQGQQRTAVLTIKLASLEIIKEQTGEYPVLLLDDVLSELDINRQKYILNSIREFQTIITGTGLIDIREYLDDHVKLFKVTNGTVNQ</sequence>
<evidence type="ECO:0000255" key="1">
    <source>
        <dbReference type="HAMAP-Rule" id="MF_00365"/>
    </source>
</evidence>
<reference key="1">
    <citation type="journal article" date="2006" name="Nat. Biotechnol.">
        <title>The genome and transcriptomes of the anti-tumor agent Clostridium novyi-NT.</title>
        <authorList>
            <person name="Bettegowda C."/>
            <person name="Huang X."/>
            <person name="Lin J."/>
            <person name="Cheong I."/>
            <person name="Kohli M."/>
            <person name="Szabo S.A."/>
            <person name="Zhang X."/>
            <person name="Diaz L.A. Jr."/>
            <person name="Velculescu V.E."/>
            <person name="Parmigiani G."/>
            <person name="Kinzler K.W."/>
            <person name="Vogelstein B."/>
            <person name="Zhou S."/>
        </authorList>
    </citation>
    <scope>NUCLEOTIDE SEQUENCE [LARGE SCALE GENOMIC DNA]</scope>
    <source>
        <strain>NT</strain>
    </source>
</reference>
<keyword id="KW-0067">ATP-binding</keyword>
<keyword id="KW-0963">Cytoplasm</keyword>
<keyword id="KW-0227">DNA damage</keyword>
<keyword id="KW-0234">DNA repair</keyword>
<keyword id="KW-0235">DNA replication</keyword>
<keyword id="KW-0238">DNA-binding</keyword>
<keyword id="KW-0547">Nucleotide-binding</keyword>
<keyword id="KW-1185">Reference proteome</keyword>
<keyword id="KW-0742">SOS response</keyword>
<organism>
    <name type="scientific">Clostridium novyi (strain NT)</name>
    <dbReference type="NCBI Taxonomy" id="386415"/>
    <lineage>
        <taxon>Bacteria</taxon>
        <taxon>Bacillati</taxon>
        <taxon>Bacillota</taxon>
        <taxon>Clostridia</taxon>
        <taxon>Eubacteriales</taxon>
        <taxon>Clostridiaceae</taxon>
        <taxon>Clostridium</taxon>
    </lineage>
</organism>
<feature type="chain" id="PRO_1000048513" description="DNA replication and repair protein RecF">
    <location>
        <begin position="1"/>
        <end position="361"/>
    </location>
</feature>
<feature type="binding site" evidence="1">
    <location>
        <begin position="30"/>
        <end position="37"/>
    </location>
    <ligand>
        <name>ATP</name>
        <dbReference type="ChEBI" id="CHEBI:30616"/>
    </ligand>
</feature>
<name>RECF_CLONN</name>
<accession>A0Q3U3</accession>
<dbReference type="EMBL" id="CP000382">
    <property type="protein sequence ID" value="ABK61417.1"/>
    <property type="molecule type" value="Genomic_DNA"/>
</dbReference>
<dbReference type="RefSeq" id="WP_011723266.1">
    <property type="nucleotide sequence ID" value="NC_008593.1"/>
</dbReference>
<dbReference type="SMR" id="A0Q3U3"/>
<dbReference type="STRING" id="386415.NT01CX_0864"/>
<dbReference type="KEGG" id="cno:NT01CX_0864"/>
<dbReference type="eggNOG" id="COG1195">
    <property type="taxonomic scope" value="Bacteria"/>
</dbReference>
<dbReference type="HOGENOM" id="CLU_040267_0_1_9"/>
<dbReference type="Proteomes" id="UP000008220">
    <property type="component" value="Chromosome"/>
</dbReference>
<dbReference type="GO" id="GO:0005737">
    <property type="term" value="C:cytoplasm"/>
    <property type="evidence" value="ECO:0007669"/>
    <property type="project" value="UniProtKB-SubCell"/>
</dbReference>
<dbReference type="GO" id="GO:0005524">
    <property type="term" value="F:ATP binding"/>
    <property type="evidence" value="ECO:0007669"/>
    <property type="project" value="UniProtKB-UniRule"/>
</dbReference>
<dbReference type="GO" id="GO:0003697">
    <property type="term" value="F:single-stranded DNA binding"/>
    <property type="evidence" value="ECO:0007669"/>
    <property type="project" value="UniProtKB-UniRule"/>
</dbReference>
<dbReference type="GO" id="GO:0006260">
    <property type="term" value="P:DNA replication"/>
    <property type="evidence" value="ECO:0007669"/>
    <property type="project" value="UniProtKB-UniRule"/>
</dbReference>
<dbReference type="GO" id="GO:0000731">
    <property type="term" value="P:DNA synthesis involved in DNA repair"/>
    <property type="evidence" value="ECO:0007669"/>
    <property type="project" value="TreeGrafter"/>
</dbReference>
<dbReference type="GO" id="GO:0006302">
    <property type="term" value="P:double-strand break repair"/>
    <property type="evidence" value="ECO:0007669"/>
    <property type="project" value="TreeGrafter"/>
</dbReference>
<dbReference type="GO" id="GO:0009432">
    <property type="term" value="P:SOS response"/>
    <property type="evidence" value="ECO:0007669"/>
    <property type="project" value="UniProtKB-UniRule"/>
</dbReference>
<dbReference type="CDD" id="cd03242">
    <property type="entry name" value="ABC_RecF"/>
    <property type="match status" value="1"/>
</dbReference>
<dbReference type="Gene3D" id="3.40.50.300">
    <property type="entry name" value="P-loop containing nucleotide triphosphate hydrolases"/>
    <property type="match status" value="1"/>
</dbReference>
<dbReference type="Gene3D" id="1.20.1050.90">
    <property type="entry name" value="RecF/RecN/SMC, N-terminal domain"/>
    <property type="match status" value="1"/>
</dbReference>
<dbReference type="HAMAP" id="MF_00365">
    <property type="entry name" value="RecF"/>
    <property type="match status" value="1"/>
</dbReference>
<dbReference type="InterPro" id="IPR001238">
    <property type="entry name" value="DNA-binding_RecF"/>
</dbReference>
<dbReference type="InterPro" id="IPR018078">
    <property type="entry name" value="DNA-binding_RecF_CS"/>
</dbReference>
<dbReference type="InterPro" id="IPR027417">
    <property type="entry name" value="P-loop_NTPase"/>
</dbReference>
<dbReference type="InterPro" id="IPR003395">
    <property type="entry name" value="RecF/RecN/SMC_N"/>
</dbReference>
<dbReference type="InterPro" id="IPR042174">
    <property type="entry name" value="RecF_2"/>
</dbReference>
<dbReference type="NCBIfam" id="TIGR00611">
    <property type="entry name" value="recf"/>
    <property type="match status" value="1"/>
</dbReference>
<dbReference type="PANTHER" id="PTHR32182">
    <property type="entry name" value="DNA REPLICATION AND REPAIR PROTEIN RECF"/>
    <property type="match status" value="1"/>
</dbReference>
<dbReference type="PANTHER" id="PTHR32182:SF0">
    <property type="entry name" value="DNA REPLICATION AND REPAIR PROTEIN RECF"/>
    <property type="match status" value="1"/>
</dbReference>
<dbReference type="Pfam" id="PF02463">
    <property type="entry name" value="SMC_N"/>
    <property type="match status" value="1"/>
</dbReference>
<dbReference type="SUPFAM" id="SSF52540">
    <property type="entry name" value="P-loop containing nucleoside triphosphate hydrolases"/>
    <property type="match status" value="1"/>
</dbReference>
<dbReference type="PROSITE" id="PS00617">
    <property type="entry name" value="RECF_1"/>
    <property type="match status" value="1"/>
</dbReference>
<dbReference type="PROSITE" id="PS00618">
    <property type="entry name" value="RECF_2"/>
    <property type="match status" value="1"/>
</dbReference>
<protein>
    <recommendedName>
        <fullName evidence="1">DNA replication and repair protein RecF</fullName>
    </recommendedName>
</protein>
<proteinExistence type="inferred from homology"/>
<comment type="function">
    <text evidence="1">The RecF protein is involved in DNA metabolism; it is required for DNA replication and normal SOS inducibility. RecF binds preferentially to single-stranded, linear DNA. It also seems to bind ATP.</text>
</comment>
<comment type="subcellular location">
    <subcellularLocation>
        <location evidence="1">Cytoplasm</location>
    </subcellularLocation>
</comment>
<comment type="similarity">
    <text evidence="1">Belongs to the RecF family.</text>
</comment>
<gene>
    <name evidence="1" type="primary">recF</name>
    <name type="ordered locus">NT01CX_0864</name>
</gene>